<accession>Q2LTS7</accession>
<sequence>MRAVVQRVDKAIVKVNDRIVSDISKGMLVFLGIEKGDDFSDADFLLEKVINLRIFEDEEGKMNRSLSDISGEMLVVSQFTLLGDCRKGRRPSFTSAEDPERSNILYSHFINQASERIPVVKSGIFQAMMKVSLVNDGPVTMLLDSKRLF</sequence>
<evidence type="ECO:0000255" key="1">
    <source>
        <dbReference type="HAMAP-Rule" id="MF_00518"/>
    </source>
</evidence>
<gene>
    <name evidence="1" type="primary">dtd</name>
    <name type="ordered locus">SYNAS_16090</name>
    <name type="ORF">SYN_00899</name>
</gene>
<keyword id="KW-0963">Cytoplasm</keyword>
<keyword id="KW-0378">Hydrolase</keyword>
<keyword id="KW-1185">Reference proteome</keyword>
<keyword id="KW-0694">RNA-binding</keyword>
<keyword id="KW-0820">tRNA-binding</keyword>
<reference key="1">
    <citation type="journal article" date="2007" name="Proc. Natl. Acad. Sci. U.S.A.">
        <title>The genome of Syntrophus aciditrophicus: life at the thermodynamic limit of microbial growth.</title>
        <authorList>
            <person name="McInerney M.J."/>
            <person name="Rohlin L."/>
            <person name="Mouttaki H."/>
            <person name="Kim U."/>
            <person name="Krupp R.S."/>
            <person name="Rios-Hernandez L."/>
            <person name="Sieber J."/>
            <person name="Struchtemeyer C.G."/>
            <person name="Bhattacharyya A."/>
            <person name="Campbell J.W."/>
            <person name="Gunsalus R.P."/>
        </authorList>
    </citation>
    <scope>NUCLEOTIDE SEQUENCE [LARGE SCALE GENOMIC DNA]</scope>
    <source>
        <strain>SB</strain>
    </source>
</reference>
<comment type="function">
    <text evidence="1">An aminoacyl-tRNA editing enzyme that deacylates mischarged D-aminoacyl-tRNAs. Also deacylates mischarged glycyl-tRNA(Ala), protecting cells against glycine mischarging by AlaRS. Acts via tRNA-based rather than protein-based catalysis; rejects L-amino acids rather than detecting D-amino acids in the active site. By recycling D-aminoacyl-tRNA to D-amino acids and free tRNA molecules, this enzyme counteracts the toxicity associated with the formation of D-aminoacyl-tRNA entities in vivo and helps enforce protein L-homochirality.</text>
</comment>
<comment type="catalytic activity">
    <reaction evidence="1">
        <text>glycyl-tRNA(Ala) + H2O = tRNA(Ala) + glycine + H(+)</text>
        <dbReference type="Rhea" id="RHEA:53744"/>
        <dbReference type="Rhea" id="RHEA-COMP:9657"/>
        <dbReference type="Rhea" id="RHEA-COMP:13640"/>
        <dbReference type="ChEBI" id="CHEBI:15377"/>
        <dbReference type="ChEBI" id="CHEBI:15378"/>
        <dbReference type="ChEBI" id="CHEBI:57305"/>
        <dbReference type="ChEBI" id="CHEBI:78442"/>
        <dbReference type="ChEBI" id="CHEBI:78522"/>
        <dbReference type="EC" id="3.1.1.96"/>
    </reaction>
</comment>
<comment type="catalytic activity">
    <reaction evidence="1">
        <text>a D-aminoacyl-tRNA + H2O = a tRNA + a D-alpha-amino acid + H(+)</text>
        <dbReference type="Rhea" id="RHEA:13953"/>
        <dbReference type="Rhea" id="RHEA-COMP:10123"/>
        <dbReference type="Rhea" id="RHEA-COMP:10124"/>
        <dbReference type="ChEBI" id="CHEBI:15377"/>
        <dbReference type="ChEBI" id="CHEBI:15378"/>
        <dbReference type="ChEBI" id="CHEBI:59871"/>
        <dbReference type="ChEBI" id="CHEBI:78442"/>
        <dbReference type="ChEBI" id="CHEBI:79333"/>
        <dbReference type="EC" id="3.1.1.96"/>
    </reaction>
</comment>
<comment type="subunit">
    <text evidence="1">Homodimer.</text>
</comment>
<comment type="subcellular location">
    <subcellularLocation>
        <location evidence="1">Cytoplasm</location>
    </subcellularLocation>
</comment>
<comment type="domain">
    <text evidence="1">A Gly-cisPro motif from one monomer fits into the active site of the other monomer to allow specific chiral rejection of L-amino acids.</text>
</comment>
<comment type="similarity">
    <text evidence="1">Belongs to the DTD family.</text>
</comment>
<protein>
    <recommendedName>
        <fullName evidence="1">D-aminoacyl-tRNA deacylase</fullName>
        <shortName evidence="1">DTD</shortName>
        <ecNumber evidence="1">3.1.1.96</ecNumber>
    </recommendedName>
    <alternativeName>
        <fullName evidence="1">Gly-tRNA(Ala) deacylase</fullName>
    </alternativeName>
</protein>
<name>DTD_SYNAS</name>
<feature type="chain" id="PRO_0000259326" description="D-aminoacyl-tRNA deacylase">
    <location>
        <begin position="1"/>
        <end position="149"/>
    </location>
</feature>
<feature type="short sequence motif" description="Gly-cisPro motif, important for rejection of L-amino acids" evidence="1">
    <location>
        <begin position="137"/>
        <end position="138"/>
    </location>
</feature>
<proteinExistence type="inferred from homology"/>
<dbReference type="EC" id="3.1.1.96" evidence="1"/>
<dbReference type="EMBL" id="CP000252">
    <property type="protein sequence ID" value="ABC77487.1"/>
    <property type="molecule type" value="Genomic_DNA"/>
</dbReference>
<dbReference type="RefSeq" id="WP_011417510.1">
    <property type="nucleotide sequence ID" value="NC_007759.1"/>
</dbReference>
<dbReference type="SMR" id="Q2LTS7"/>
<dbReference type="FunCoup" id="Q2LTS7">
    <property type="interactions" value="387"/>
</dbReference>
<dbReference type="STRING" id="56780.SYN_00899"/>
<dbReference type="KEGG" id="sat:SYN_00899"/>
<dbReference type="eggNOG" id="COG1490">
    <property type="taxonomic scope" value="Bacteria"/>
</dbReference>
<dbReference type="HOGENOM" id="CLU_076901_1_0_7"/>
<dbReference type="InParanoid" id="Q2LTS7"/>
<dbReference type="OrthoDB" id="9801395at2"/>
<dbReference type="Proteomes" id="UP000001933">
    <property type="component" value="Chromosome"/>
</dbReference>
<dbReference type="GO" id="GO:0005737">
    <property type="term" value="C:cytoplasm"/>
    <property type="evidence" value="ECO:0007669"/>
    <property type="project" value="UniProtKB-SubCell"/>
</dbReference>
<dbReference type="GO" id="GO:0051500">
    <property type="term" value="F:D-tyrosyl-tRNA(Tyr) deacylase activity"/>
    <property type="evidence" value="ECO:0007669"/>
    <property type="project" value="TreeGrafter"/>
</dbReference>
<dbReference type="GO" id="GO:0106026">
    <property type="term" value="F:Gly-tRNA(Ala) deacylase activity"/>
    <property type="evidence" value="ECO:0007669"/>
    <property type="project" value="UniProtKB-UniRule"/>
</dbReference>
<dbReference type="GO" id="GO:0043908">
    <property type="term" value="F:Ser(Gly)-tRNA(Ala) hydrolase activity"/>
    <property type="evidence" value="ECO:0007669"/>
    <property type="project" value="UniProtKB-UniRule"/>
</dbReference>
<dbReference type="GO" id="GO:0000049">
    <property type="term" value="F:tRNA binding"/>
    <property type="evidence" value="ECO:0007669"/>
    <property type="project" value="UniProtKB-UniRule"/>
</dbReference>
<dbReference type="GO" id="GO:0019478">
    <property type="term" value="P:D-amino acid catabolic process"/>
    <property type="evidence" value="ECO:0007669"/>
    <property type="project" value="UniProtKB-UniRule"/>
</dbReference>
<dbReference type="CDD" id="cd00563">
    <property type="entry name" value="Dtyr_deacylase"/>
    <property type="match status" value="1"/>
</dbReference>
<dbReference type="FunFam" id="3.50.80.10:FF:000001">
    <property type="entry name" value="D-aminoacyl-tRNA deacylase"/>
    <property type="match status" value="1"/>
</dbReference>
<dbReference type="Gene3D" id="3.50.80.10">
    <property type="entry name" value="D-tyrosyl-tRNA(Tyr) deacylase"/>
    <property type="match status" value="1"/>
</dbReference>
<dbReference type="HAMAP" id="MF_00518">
    <property type="entry name" value="Deacylase_Dtd"/>
    <property type="match status" value="1"/>
</dbReference>
<dbReference type="InterPro" id="IPR003732">
    <property type="entry name" value="Daa-tRNA_deacyls_DTD"/>
</dbReference>
<dbReference type="InterPro" id="IPR023509">
    <property type="entry name" value="DTD-like_sf"/>
</dbReference>
<dbReference type="NCBIfam" id="TIGR00256">
    <property type="entry name" value="D-aminoacyl-tRNA deacylase"/>
    <property type="match status" value="1"/>
</dbReference>
<dbReference type="PANTHER" id="PTHR10472:SF5">
    <property type="entry name" value="D-AMINOACYL-TRNA DEACYLASE 1"/>
    <property type="match status" value="1"/>
</dbReference>
<dbReference type="PANTHER" id="PTHR10472">
    <property type="entry name" value="D-TYROSYL-TRNA TYR DEACYLASE"/>
    <property type="match status" value="1"/>
</dbReference>
<dbReference type="Pfam" id="PF02580">
    <property type="entry name" value="Tyr_Deacylase"/>
    <property type="match status" value="1"/>
</dbReference>
<dbReference type="SUPFAM" id="SSF69500">
    <property type="entry name" value="DTD-like"/>
    <property type="match status" value="1"/>
</dbReference>
<organism>
    <name type="scientific">Syntrophus aciditrophicus (strain SB)</name>
    <dbReference type="NCBI Taxonomy" id="56780"/>
    <lineage>
        <taxon>Bacteria</taxon>
        <taxon>Pseudomonadati</taxon>
        <taxon>Thermodesulfobacteriota</taxon>
        <taxon>Syntrophia</taxon>
        <taxon>Syntrophales</taxon>
        <taxon>Syntrophaceae</taxon>
        <taxon>Syntrophus</taxon>
    </lineage>
</organism>